<gene>
    <name type="primary">Chrna5</name>
    <name type="synonym">Acra5</name>
</gene>
<dbReference type="EMBL" id="J05231">
    <property type="protein sequence ID" value="AAA74475.1"/>
    <property type="molecule type" value="mRNA"/>
</dbReference>
<dbReference type="PIR" id="A35721">
    <property type="entry name" value="A35721"/>
</dbReference>
<dbReference type="SMR" id="P20420"/>
<dbReference type="ComplexPortal" id="CPX-190">
    <property type="entry name" value="Neuronal nicotinic acetylcholine receptor complex, alpha3-alpha5-beta2"/>
</dbReference>
<dbReference type="ComplexPortal" id="CPX-208">
    <property type="entry name" value="Neuronal nicotinic acetylcholine receptor complex, alpha3-alpha5-beta4"/>
</dbReference>
<dbReference type="ComplexPortal" id="CPX-215">
    <property type="entry name" value="Neuronal nicotinic acetylcholine receptor complex, alpha4-alpha5-beta2"/>
</dbReference>
<dbReference type="FunCoup" id="P20420">
    <property type="interactions" value="45"/>
</dbReference>
<dbReference type="IntAct" id="P20420">
    <property type="interactions" value="5"/>
</dbReference>
<dbReference type="STRING" id="10116.ENSRNOP00000062227"/>
<dbReference type="BindingDB" id="P20420"/>
<dbReference type="ChEMBL" id="CHEMBL4106146"/>
<dbReference type="DrugCentral" id="P20420"/>
<dbReference type="GlyCosmos" id="P20420">
    <property type="glycosylation" value="3 sites, No reported glycans"/>
</dbReference>
<dbReference type="GlyGen" id="P20420">
    <property type="glycosylation" value="3 sites"/>
</dbReference>
<dbReference type="PhosphoSitePlus" id="P20420"/>
<dbReference type="PaxDb" id="10116-ENSRNOP00000062227"/>
<dbReference type="UCSC" id="RGD:2347">
    <property type="organism name" value="rat"/>
</dbReference>
<dbReference type="AGR" id="RGD:2347"/>
<dbReference type="RGD" id="2347">
    <property type="gene designation" value="Chrna5"/>
</dbReference>
<dbReference type="eggNOG" id="KOG3645">
    <property type="taxonomic scope" value="Eukaryota"/>
</dbReference>
<dbReference type="InParanoid" id="P20420"/>
<dbReference type="PhylomeDB" id="P20420"/>
<dbReference type="Reactome" id="R-RNO-629594">
    <property type="pathway name" value="Highly calcium permeable postsynaptic nicotinic acetylcholine receptors"/>
</dbReference>
<dbReference type="Reactome" id="R-RNO-629597">
    <property type="pathway name" value="Highly calcium permeable nicotinic acetylcholine receptors"/>
</dbReference>
<dbReference type="PRO" id="PR:P20420"/>
<dbReference type="Proteomes" id="UP000002494">
    <property type="component" value="Unplaced"/>
</dbReference>
<dbReference type="GO" id="GO:0005892">
    <property type="term" value="C:acetylcholine-gated channel complex"/>
    <property type="evidence" value="ECO:0000314"/>
    <property type="project" value="RGD"/>
</dbReference>
<dbReference type="GO" id="GO:0098981">
    <property type="term" value="C:cholinergic synapse"/>
    <property type="evidence" value="ECO:0000266"/>
    <property type="project" value="RGD"/>
</dbReference>
<dbReference type="GO" id="GO:0030425">
    <property type="term" value="C:dendrite"/>
    <property type="evidence" value="ECO:0000314"/>
    <property type="project" value="RGD"/>
</dbReference>
<dbReference type="GO" id="GO:0098691">
    <property type="term" value="C:dopaminergic synapse"/>
    <property type="evidence" value="ECO:0000266"/>
    <property type="project" value="RGD"/>
</dbReference>
<dbReference type="GO" id="GO:0043005">
    <property type="term" value="C:neuron projection"/>
    <property type="evidence" value="ECO:0000318"/>
    <property type="project" value="GO_Central"/>
</dbReference>
<dbReference type="GO" id="GO:0043025">
    <property type="term" value="C:neuronal cell body"/>
    <property type="evidence" value="ECO:0000314"/>
    <property type="project" value="RGD"/>
</dbReference>
<dbReference type="GO" id="GO:0005886">
    <property type="term" value="C:plasma membrane"/>
    <property type="evidence" value="ECO:0000318"/>
    <property type="project" value="GO_Central"/>
</dbReference>
<dbReference type="GO" id="GO:0045211">
    <property type="term" value="C:postsynaptic membrane"/>
    <property type="evidence" value="ECO:0007669"/>
    <property type="project" value="UniProtKB-KW"/>
</dbReference>
<dbReference type="GO" id="GO:0098793">
    <property type="term" value="C:presynapse"/>
    <property type="evidence" value="ECO:0007669"/>
    <property type="project" value="GOC"/>
</dbReference>
<dbReference type="GO" id="GO:0045202">
    <property type="term" value="C:synapse"/>
    <property type="evidence" value="ECO:0000318"/>
    <property type="project" value="GO_Central"/>
</dbReference>
<dbReference type="GO" id="GO:0042166">
    <property type="term" value="F:acetylcholine binding"/>
    <property type="evidence" value="ECO:0000314"/>
    <property type="project" value="RGD"/>
</dbReference>
<dbReference type="GO" id="GO:0015464">
    <property type="term" value="F:acetylcholine receptor activity"/>
    <property type="evidence" value="ECO:0000266"/>
    <property type="project" value="RGD"/>
</dbReference>
<dbReference type="GO" id="GO:0022848">
    <property type="term" value="F:acetylcholine-gated monoatomic cation-selective channel activity"/>
    <property type="evidence" value="ECO:0000315"/>
    <property type="project" value="RGD"/>
</dbReference>
<dbReference type="GO" id="GO:0044877">
    <property type="term" value="F:protein-containing complex binding"/>
    <property type="evidence" value="ECO:0000314"/>
    <property type="project" value="RGD"/>
</dbReference>
<dbReference type="GO" id="GO:0095500">
    <property type="term" value="P:acetylcholine receptor signaling pathway"/>
    <property type="evidence" value="ECO:0000318"/>
    <property type="project" value="GO_Central"/>
</dbReference>
<dbReference type="GO" id="GO:0035095">
    <property type="term" value="P:behavioral response to nicotine"/>
    <property type="evidence" value="ECO:0000315"/>
    <property type="project" value="RGD"/>
</dbReference>
<dbReference type="GO" id="GO:0071316">
    <property type="term" value="P:cellular response to nicotine"/>
    <property type="evidence" value="ECO:0000315"/>
    <property type="project" value="RGD"/>
</dbReference>
<dbReference type="GO" id="GO:0050966">
    <property type="term" value="P:detection of mechanical stimulus involved in sensory perception of pain"/>
    <property type="evidence" value="ECO:0000315"/>
    <property type="project" value="RGD"/>
</dbReference>
<dbReference type="GO" id="GO:0021766">
    <property type="term" value="P:hippocampus development"/>
    <property type="evidence" value="ECO:0000270"/>
    <property type="project" value="RGD"/>
</dbReference>
<dbReference type="GO" id="GO:0051899">
    <property type="term" value="P:membrane depolarization"/>
    <property type="evidence" value="ECO:0000318"/>
    <property type="project" value="GO_Central"/>
</dbReference>
<dbReference type="GO" id="GO:0034220">
    <property type="term" value="P:monoatomic ion transmembrane transport"/>
    <property type="evidence" value="ECO:0000318"/>
    <property type="project" value="GO_Central"/>
</dbReference>
<dbReference type="GO" id="GO:0007274">
    <property type="term" value="P:neuromuscular synaptic transmission"/>
    <property type="evidence" value="ECO:0000318"/>
    <property type="project" value="GO_Central"/>
</dbReference>
<dbReference type="GO" id="GO:0099171">
    <property type="term" value="P:presynaptic modulation of chemical synaptic transmission"/>
    <property type="evidence" value="ECO:0000266"/>
    <property type="project" value="RGD"/>
</dbReference>
<dbReference type="GO" id="GO:0098908">
    <property type="term" value="P:regulation of neuronal action potential"/>
    <property type="evidence" value="ECO:0000315"/>
    <property type="project" value="RGD"/>
</dbReference>
<dbReference type="GO" id="GO:0035094">
    <property type="term" value="P:response to nicotine"/>
    <property type="evidence" value="ECO:0000266"/>
    <property type="project" value="RGD"/>
</dbReference>
<dbReference type="GO" id="GO:0007271">
    <property type="term" value="P:synaptic transmission, cholinergic"/>
    <property type="evidence" value="ECO:0000318"/>
    <property type="project" value="GO_Central"/>
</dbReference>
<dbReference type="CDD" id="cd19064">
    <property type="entry name" value="LGIC_TM_nAChR"/>
    <property type="match status" value="1"/>
</dbReference>
<dbReference type="FunFam" id="1.20.58.390:FF:000041">
    <property type="entry name" value="Neuronal acetylcholine receptor subunit alpha-5"/>
    <property type="match status" value="1"/>
</dbReference>
<dbReference type="FunFam" id="2.70.170.10:FF:000047">
    <property type="entry name" value="neuronal acetylcholine receptor subunit alpha-5 isoform X2"/>
    <property type="match status" value="1"/>
</dbReference>
<dbReference type="FunFam" id="1.20.58.390:FF:000001">
    <property type="entry name" value="Neuronal nicotinic acetylcholine receptor subunit 3"/>
    <property type="match status" value="1"/>
</dbReference>
<dbReference type="Gene3D" id="2.70.170.10">
    <property type="entry name" value="Neurotransmitter-gated ion-channel ligand-binding domain"/>
    <property type="match status" value="1"/>
</dbReference>
<dbReference type="Gene3D" id="1.20.58.390">
    <property type="entry name" value="Neurotransmitter-gated ion-channel transmembrane domain"/>
    <property type="match status" value="2"/>
</dbReference>
<dbReference type="InterPro" id="IPR006202">
    <property type="entry name" value="Neur_chan_lig-bd"/>
</dbReference>
<dbReference type="InterPro" id="IPR036734">
    <property type="entry name" value="Neur_chan_lig-bd_sf"/>
</dbReference>
<dbReference type="InterPro" id="IPR006201">
    <property type="entry name" value="Neur_channel"/>
</dbReference>
<dbReference type="InterPro" id="IPR036719">
    <property type="entry name" value="Neuro-gated_channel_TM_sf"/>
</dbReference>
<dbReference type="InterPro" id="IPR038050">
    <property type="entry name" value="Neuro_actylchol_rec"/>
</dbReference>
<dbReference type="InterPro" id="IPR006029">
    <property type="entry name" value="Neurotrans-gated_channel_TM"/>
</dbReference>
<dbReference type="InterPro" id="IPR018000">
    <property type="entry name" value="Neurotransmitter_ion_chnl_CS"/>
</dbReference>
<dbReference type="InterPro" id="IPR002394">
    <property type="entry name" value="Nicotinic_acetylcholine_rcpt"/>
</dbReference>
<dbReference type="NCBIfam" id="TIGR00860">
    <property type="entry name" value="LIC"/>
    <property type="match status" value="1"/>
</dbReference>
<dbReference type="PANTHER" id="PTHR18945">
    <property type="entry name" value="NEUROTRANSMITTER GATED ION CHANNEL"/>
    <property type="match status" value="1"/>
</dbReference>
<dbReference type="Pfam" id="PF02931">
    <property type="entry name" value="Neur_chan_LBD"/>
    <property type="match status" value="1"/>
</dbReference>
<dbReference type="Pfam" id="PF02932">
    <property type="entry name" value="Neur_chan_memb"/>
    <property type="match status" value="2"/>
</dbReference>
<dbReference type="PRINTS" id="PR00254">
    <property type="entry name" value="NICOTINICR"/>
</dbReference>
<dbReference type="PRINTS" id="PR00252">
    <property type="entry name" value="NRIONCHANNEL"/>
</dbReference>
<dbReference type="SUPFAM" id="SSF90112">
    <property type="entry name" value="Neurotransmitter-gated ion-channel transmembrane pore"/>
    <property type="match status" value="1"/>
</dbReference>
<dbReference type="SUPFAM" id="SSF63712">
    <property type="entry name" value="Nicotinic receptor ligand binding domain-like"/>
    <property type="match status" value="1"/>
</dbReference>
<dbReference type="PROSITE" id="PS00236">
    <property type="entry name" value="NEUROTR_ION_CHANNEL"/>
    <property type="match status" value="1"/>
</dbReference>
<accession>P20420</accession>
<protein>
    <recommendedName>
        <fullName>Neuronal acetylcholine receptor subunit alpha-5</fullName>
    </recommendedName>
</protein>
<reference key="1">
    <citation type="journal article" date="1990" name="J. Biol. Chem.">
        <title>Alpha 3, alpha 5, and beta 4: three members of the rat neuronal nicotinic acetylcholine receptor-related gene family form a gene cluster.</title>
        <authorList>
            <person name="Boulter J."/>
            <person name="O'Shea-Greenfield A."/>
            <person name="Duvoisin R.M."/>
            <person name="Connolly J.G."/>
            <person name="Wada E."/>
            <person name="Jensen A."/>
            <person name="Gardner P.D."/>
            <person name="Ballivet M."/>
            <person name="Deneris E.S."/>
            <person name="McKinnon D."/>
            <person name="Heinemann S.F."/>
            <person name="Patrick J."/>
        </authorList>
    </citation>
    <scope>NUCLEOTIDE SEQUENCE [MRNA]</scope>
</reference>
<sequence length="452" mass="51874">MVQLLAGRWRPTGARRGTRGGLPELSSAAKHEDSLFRDLFEDYERWVRPVEHLSDKIKIKFGLAISQLVDVDEKNQLMTTNVWLKQEWIDVKLRWNPDDYGGIKIIRVPSDSLWIPDIVLFDNADGRFEGASTKTVVRYNGTVTWTQPANYKSSCTIDVTFFPFDLQNCSMKFGSWTYDGSQVDIILEDQDVDRTDFFDNGEWEIMSAMGSKGNRTDSCCWYPYITYSFVIKRLPLFYTLFLIIPCIGLSFLTVVVFYLPSNEGEKISLCTSVLVSLTVFLLVIEEIIPSSSKVIPLIGEYLVFTMIFVTLSIMVTVFAINIHHRSSSTHNAMAPWVRKIFLHKLPKLLCMRSHADRYFTQREEAESGAGPKSRNTLEAALDCIRYITRHVVKENDVREVVEDWKFIAQVLDRMFLWTFLLVSIIGTLGLFVPVIYKWANIIVPVHIGNTIK</sequence>
<organism>
    <name type="scientific">Rattus norvegicus</name>
    <name type="common">Rat</name>
    <dbReference type="NCBI Taxonomy" id="10116"/>
    <lineage>
        <taxon>Eukaryota</taxon>
        <taxon>Metazoa</taxon>
        <taxon>Chordata</taxon>
        <taxon>Craniata</taxon>
        <taxon>Vertebrata</taxon>
        <taxon>Euteleostomi</taxon>
        <taxon>Mammalia</taxon>
        <taxon>Eutheria</taxon>
        <taxon>Euarchontoglires</taxon>
        <taxon>Glires</taxon>
        <taxon>Rodentia</taxon>
        <taxon>Myomorpha</taxon>
        <taxon>Muroidea</taxon>
        <taxon>Muridae</taxon>
        <taxon>Murinae</taxon>
        <taxon>Rattus</taxon>
    </lineage>
</organism>
<keyword id="KW-1003">Cell membrane</keyword>
<keyword id="KW-1015">Disulfide bond</keyword>
<keyword id="KW-0325">Glycoprotein</keyword>
<keyword id="KW-0407">Ion channel</keyword>
<keyword id="KW-0406">Ion transport</keyword>
<keyword id="KW-1071">Ligand-gated ion channel</keyword>
<keyword id="KW-0472">Membrane</keyword>
<keyword id="KW-0675">Receptor</keyword>
<keyword id="KW-1185">Reference proteome</keyword>
<keyword id="KW-0732">Signal</keyword>
<keyword id="KW-0770">Synapse</keyword>
<keyword id="KW-0812">Transmembrane</keyword>
<keyword id="KW-1133">Transmembrane helix</keyword>
<keyword id="KW-0813">Transport</keyword>
<name>ACHA5_RAT</name>
<comment type="function">
    <text evidence="2">Component of neuronal acetylcholine receptors (nAChRs) that function as pentameric, ligand-gated cation channels with high calcium permeability among other activities. nAChRs are excitatory neurotrasnmitter receptors formed by a collection of nAChR subunits known to mediate synaptic transmission in the nervous system and the neuromuscular junction. Each nAchR subunit confers differential attributes to channel properties, including activation, deactivation and desensitization kinetics, pH sensitivity, cation permeability, and binding to allosteric modulators. Has an accessory rather than functional role and is only able to form functional nAChRs when co-assembled with another beta subunit. Participates in pentameric assemblies along with CHRNA3, CHRNA4, CHRNB2 and CHRNB4. Increases receptor sensitivity to acetylcholine and nicotine when associated with CHRNA4 and CHRNB2. Plays a role in nicotine addiction.</text>
</comment>
<comment type="catalytic activity">
    <reaction evidence="2">
        <text>Ca(2+)(in) = Ca(2+)(out)</text>
        <dbReference type="Rhea" id="RHEA:29671"/>
        <dbReference type="ChEBI" id="CHEBI:29108"/>
    </reaction>
</comment>
<comment type="catalytic activity">
    <reaction evidence="1">
        <text>K(+)(in) = K(+)(out)</text>
        <dbReference type="Rhea" id="RHEA:29463"/>
        <dbReference type="ChEBI" id="CHEBI:29103"/>
    </reaction>
</comment>
<comment type="catalytic activity">
    <reaction evidence="4">
        <text>Na(+)(in) = Na(+)(out)</text>
        <dbReference type="Rhea" id="RHEA:34963"/>
        <dbReference type="ChEBI" id="CHEBI:29101"/>
    </reaction>
</comment>
<comment type="activity regulation">
    <text evidence="2">Activated by a myriad of ligands such as acetylcholine, cytisine, nicotine, choline and epibatidine.</text>
</comment>
<comment type="subunit">
    <text evidence="2">Neuronal AChR that forms heteropentamers composed of two different type of subunits: alpha and non-alpha (beta). CHRNA5/alpha-5 subunit is only able to form functional nAChRs when co-assembled with another alpha subunit, can be combined to CHRNA4/alpha-4 or CHRNA3/alpha-3 and CHRNB4/beta-4 or CHRNB2/beta-2 to give rise to functional receptors. Interacts with LYPD6.</text>
</comment>
<comment type="interaction">
    <interactant intactId="EBI-10828372">
        <id>P20420</id>
    </interactant>
    <interactant intactId="EBI-7842410">
        <id>P09483</id>
        <label>Chrna4</label>
    </interactant>
    <organismsDiffer>false</organismsDiffer>
    <experiments>6</experiments>
</comment>
<comment type="subcellular location">
    <subcellularLocation>
        <location evidence="3">Synaptic cell membrane</location>
        <topology evidence="5">Multi-pass membrane protein</topology>
    </subcellularLocation>
    <subcellularLocation>
        <location evidence="3">Cell membrane</location>
        <topology evidence="5">Multi-pass membrane protein</topology>
    </subcellularLocation>
</comment>
<comment type="similarity">
    <text evidence="6">Belongs to the ligand-gated ion channel (TC 1.A.9) family. Acetylcholine receptor (TC 1.A.9.1) subfamily. Alpha-5/CHRNA5 sub-subfamily.</text>
</comment>
<evidence type="ECO:0000250" key="1">
    <source>
        <dbReference type="UniProtKB" id="P02709"/>
    </source>
</evidence>
<evidence type="ECO:0000250" key="2">
    <source>
        <dbReference type="UniProtKB" id="P30532"/>
    </source>
</evidence>
<evidence type="ECO:0000250" key="3">
    <source>
        <dbReference type="UniProtKB" id="P32297"/>
    </source>
</evidence>
<evidence type="ECO:0000250" key="4">
    <source>
        <dbReference type="UniProtKB" id="P43681"/>
    </source>
</evidence>
<evidence type="ECO:0000255" key="5"/>
<evidence type="ECO:0000305" key="6"/>
<proteinExistence type="evidence at protein level"/>
<feature type="signal peptide" evidence="5">
    <location>
        <begin position="1"/>
        <end position="27"/>
    </location>
</feature>
<feature type="chain" id="PRO_0000000358" description="Neuronal acetylcholine receptor subunit alpha-5">
    <location>
        <begin position="28"/>
        <end position="452"/>
    </location>
</feature>
<feature type="topological domain" description="Extracellular" evidence="5">
    <location>
        <begin position="28"/>
        <end position="239"/>
    </location>
</feature>
<feature type="transmembrane region" description="Helical" evidence="5">
    <location>
        <begin position="240"/>
        <end position="260"/>
    </location>
</feature>
<feature type="transmembrane region" description="Helical" evidence="5">
    <location>
        <begin position="269"/>
        <end position="289"/>
    </location>
</feature>
<feature type="transmembrane region" description="Helical" evidence="5">
    <location>
        <begin position="302"/>
        <end position="322"/>
    </location>
</feature>
<feature type="topological domain" description="Cytoplasmic" evidence="5">
    <location>
        <begin position="323"/>
        <end position="414"/>
    </location>
</feature>
<feature type="transmembrane region" description="Helical" evidence="5">
    <location>
        <begin position="415"/>
        <end position="435"/>
    </location>
</feature>
<feature type="topological domain" description="Extracellular" evidence="5">
    <location>
        <begin position="436"/>
        <end position="452"/>
    </location>
</feature>
<feature type="glycosylation site" description="N-linked (GlcNAc...) asparagine" evidence="5">
    <location>
        <position position="140"/>
    </location>
</feature>
<feature type="glycosylation site" description="N-linked (GlcNAc...) asparagine" evidence="5">
    <location>
        <position position="168"/>
    </location>
</feature>
<feature type="glycosylation site" description="N-linked (GlcNAc...) asparagine" evidence="5">
    <location>
        <position position="214"/>
    </location>
</feature>
<feature type="disulfide bond" evidence="3">
    <location>
        <begin position="155"/>
        <end position="169"/>
    </location>
</feature>
<feature type="disulfide bond" description="Associated with receptor activation" evidence="3">
    <location>
        <begin position="219"/>
        <end position="220"/>
    </location>
</feature>